<accession>F7E727</accession>
<protein>
    <recommendedName>
        <fullName evidence="3">ATP-dependent (S)-NAD(P)H-hydrate dehydratase</fullName>
        <ecNumber evidence="2 3">4.2.1.93</ecNumber>
    </recommendedName>
    <alternativeName>
        <fullName evidence="3">ATP-dependent NAD(P)HX dehydratase</fullName>
    </alternativeName>
    <alternativeName>
        <fullName evidence="3">Carbohydrate kinase domain-containing protein</fullName>
    </alternativeName>
    <alternativeName>
        <fullName evidence="1">NAD(P)HX dehydratase</fullName>
    </alternativeName>
</protein>
<sequence length="389" mass="41484">MVTRAGAGAAVAATAVVALLSAALALYRPPLDAVLERAFSLRKVHSIKDMENTLQLVRNIIPPLSSTKHKGQDGRIGVVGGCQEYTGAPYFAAISALKVGADLSHVFCASAAAPVIKAYSPELIVHPVLDSPSAVDEVEKWLPRLHALVFHCERGTQPGFLFWQGILEASKARDIPVVIDADGLWLVAQQPALIQGYQKAVLTPNHMEFSRLYDAVLRGPVDSDDRHGSVLRLSQALGNVTVVQKGERDILSNGQQVLVCSQEGSSRRCGGQGDLLSGSLGVLVHWALLAGPEKTNGGMLDLKLTIWGPKIETGIKTRAQGGCGPRTTAPTSPHLPLSPSPQVQPSPGGCIRRLLSHQAVQPPSLPEARSLHHHLRHDRRGGGRLPQAL</sequence>
<organism>
    <name type="scientific">Macaca mulatta</name>
    <name type="common">Rhesus macaque</name>
    <dbReference type="NCBI Taxonomy" id="9544"/>
    <lineage>
        <taxon>Eukaryota</taxon>
        <taxon>Metazoa</taxon>
        <taxon>Chordata</taxon>
        <taxon>Craniata</taxon>
        <taxon>Vertebrata</taxon>
        <taxon>Euteleostomi</taxon>
        <taxon>Mammalia</taxon>
        <taxon>Eutheria</taxon>
        <taxon>Euarchontoglires</taxon>
        <taxon>Primates</taxon>
        <taxon>Haplorrhini</taxon>
        <taxon>Catarrhini</taxon>
        <taxon>Cercopithecidae</taxon>
        <taxon>Cercopithecinae</taxon>
        <taxon>Macaca</taxon>
    </lineage>
</organism>
<proteinExistence type="inferred from homology"/>
<keyword id="KW-0067">ATP-binding</keyword>
<keyword id="KW-0456">Lyase</keyword>
<keyword id="KW-0496">Mitochondrion</keyword>
<keyword id="KW-0520">NAD</keyword>
<keyword id="KW-0521">NADP</keyword>
<keyword id="KW-0547">Nucleotide-binding</keyword>
<keyword id="KW-0597">Phosphoprotein</keyword>
<keyword id="KW-1185">Reference proteome</keyword>
<reference key="1">
    <citation type="journal article" date="2007" name="Science">
        <title>Evolutionary and biomedical insights from the rhesus macaque genome.</title>
        <authorList>
            <person name="Gibbs R.A."/>
            <person name="Rogers J."/>
            <person name="Katze M.G."/>
            <person name="Bumgarner R."/>
            <person name="Weinstock G.M."/>
            <person name="Mardis E.R."/>
            <person name="Remington K.A."/>
            <person name="Strausberg R.L."/>
            <person name="Venter J.C."/>
            <person name="Wilson R.K."/>
            <person name="Batzer M.A."/>
            <person name="Bustamante C.D."/>
            <person name="Eichler E.E."/>
            <person name="Hahn M.W."/>
            <person name="Hardison R.C."/>
            <person name="Makova K.D."/>
            <person name="Miller W."/>
            <person name="Milosavljevic A."/>
            <person name="Palermo R.E."/>
            <person name="Siepel A."/>
            <person name="Sikela J.M."/>
            <person name="Attaway T."/>
            <person name="Bell S."/>
            <person name="Bernard K.E."/>
            <person name="Buhay C.J."/>
            <person name="Chandrabose M.N."/>
            <person name="Dao M."/>
            <person name="Davis C."/>
            <person name="Delehaunty K.D."/>
            <person name="Ding Y."/>
            <person name="Dinh H.H."/>
            <person name="Dugan-Rocha S."/>
            <person name="Fulton L.A."/>
            <person name="Gabisi R.A."/>
            <person name="Garner T.T."/>
            <person name="Godfrey J."/>
            <person name="Hawes A.C."/>
            <person name="Hernandez J."/>
            <person name="Hines S."/>
            <person name="Holder M."/>
            <person name="Hume J."/>
            <person name="Jhangiani S.N."/>
            <person name="Joshi V."/>
            <person name="Khan Z.M."/>
            <person name="Kirkness E.F."/>
            <person name="Cree A."/>
            <person name="Fowler R.G."/>
            <person name="Lee S."/>
            <person name="Lewis L.R."/>
            <person name="Li Z."/>
            <person name="Liu Y.-S."/>
            <person name="Moore S.M."/>
            <person name="Muzny D."/>
            <person name="Nazareth L.V."/>
            <person name="Ngo D.N."/>
            <person name="Okwuonu G.O."/>
            <person name="Pai G."/>
            <person name="Parker D."/>
            <person name="Paul H.A."/>
            <person name="Pfannkoch C."/>
            <person name="Pohl C.S."/>
            <person name="Rogers Y.-H.C."/>
            <person name="Ruiz S.J."/>
            <person name="Sabo A."/>
            <person name="Santibanez J."/>
            <person name="Schneider B.W."/>
            <person name="Smith S.M."/>
            <person name="Sodergren E."/>
            <person name="Svatek A.F."/>
            <person name="Utterback T.R."/>
            <person name="Vattathil S."/>
            <person name="Warren W."/>
            <person name="White C.S."/>
            <person name="Chinwalla A.T."/>
            <person name="Feng Y."/>
            <person name="Halpern A.L."/>
            <person name="Hillier L.W."/>
            <person name="Huang X."/>
            <person name="Minx P."/>
            <person name="Nelson J.O."/>
            <person name="Pepin K.H."/>
            <person name="Qin X."/>
            <person name="Sutton G.G."/>
            <person name="Venter E."/>
            <person name="Walenz B.P."/>
            <person name="Wallis J.W."/>
            <person name="Worley K.C."/>
            <person name="Yang S.-P."/>
            <person name="Jones S.M."/>
            <person name="Marra M.A."/>
            <person name="Rocchi M."/>
            <person name="Schein J.E."/>
            <person name="Baertsch R."/>
            <person name="Clarke L."/>
            <person name="Csuros M."/>
            <person name="Glasscock J."/>
            <person name="Harris R.A."/>
            <person name="Havlak P."/>
            <person name="Jackson A.R."/>
            <person name="Jiang H."/>
            <person name="Liu Y."/>
            <person name="Messina D.N."/>
            <person name="Shen Y."/>
            <person name="Song H.X.-Z."/>
            <person name="Wylie T."/>
            <person name="Zhang L."/>
            <person name="Birney E."/>
            <person name="Han K."/>
            <person name="Konkel M.K."/>
            <person name="Lee J."/>
            <person name="Smit A.F.A."/>
            <person name="Ullmer B."/>
            <person name="Wang H."/>
            <person name="Xing J."/>
            <person name="Burhans R."/>
            <person name="Cheng Z."/>
            <person name="Karro J.E."/>
            <person name="Ma J."/>
            <person name="Raney B."/>
            <person name="She X."/>
            <person name="Cox M.J."/>
            <person name="Demuth J.P."/>
            <person name="Dumas L.J."/>
            <person name="Han S.-G."/>
            <person name="Hopkins J."/>
            <person name="Karimpour-Fard A."/>
            <person name="Kim Y.H."/>
            <person name="Pollack J.R."/>
            <person name="Vinar T."/>
            <person name="Addo-Quaye C."/>
            <person name="Degenhardt J."/>
            <person name="Denby A."/>
            <person name="Hubisz M.J."/>
            <person name="Indap A."/>
            <person name="Kosiol C."/>
            <person name="Lahn B.T."/>
            <person name="Lawson H.A."/>
            <person name="Marklein A."/>
            <person name="Nielsen R."/>
            <person name="Vallender E.J."/>
            <person name="Clark A.G."/>
            <person name="Ferguson B."/>
            <person name="Hernandez R.D."/>
            <person name="Hirani K."/>
            <person name="Kehrer-Sawatzki H."/>
            <person name="Kolb J."/>
            <person name="Patil S."/>
            <person name="Pu L.-L."/>
            <person name="Ren Y."/>
            <person name="Smith D.G."/>
            <person name="Wheeler D.A."/>
            <person name="Schenck I."/>
            <person name="Ball E.V."/>
            <person name="Chen R."/>
            <person name="Cooper D.N."/>
            <person name="Giardine B."/>
            <person name="Hsu F."/>
            <person name="Kent W.J."/>
            <person name="Lesk A."/>
            <person name="Nelson D.L."/>
            <person name="O'brien W.E."/>
            <person name="Pruefer K."/>
            <person name="Stenson P.D."/>
            <person name="Wallace J.C."/>
            <person name="Ke H."/>
            <person name="Liu X.-M."/>
            <person name="Wang P."/>
            <person name="Xiang A.P."/>
            <person name="Yang F."/>
            <person name="Barber G.P."/>
            <person name="Haussler D."/>
            <person name="Karolchik D."/>
            <person name="Kern A.D."/>
            <person name="Kuhn R.M."/>
            <person name="Smith K.E."/>
            <person name="Zwieg A.S."/>
        </authorList>
    </citation>
    <scope>NUCLEOTIDE SEQUENCE [LARGE SCALE GENOMIC DNA]</scope>
    <source>
        <strain>17573</strain>
    </source>
</reference>
<name>NNRD_MACMU</name>
<comment type="function">
    <text evidence="3">Catalyzes the dehydration of the S-form of NAD(P)HX at the expense of ATP, which is converted to ADP. Together with NAD(P)HX epimerase, which catalyzes the epimerization of the S- and R-forms, the enzyme allows the repair of both epimers of NAD(P)HX, a damaged form of NAD(P)H that is a result of enzymatic or heat-dependent hydration.</text>
</comment>
<comment type="catalytic activity">
    <reaction evidence="2 3">
        <text>(6S)-NADHX + ATP = ADP + phosphate + NADH + H(+)</text>
        <dbReference type="Rhea" id="RHEA:19017"/>
        <dbReference type="ChEBI" id="CHEBI:15378"/>
        <dbReference type="ChEBI" id="CHEBI:30616"/>
        <dbReference type="ChEBI" id="CHEBI:43474"/>
        <dbReference type="ChEBI" id="CHEBI:57945"/>
        <dbReference type="ChEBI" id="CHEBI:64074"/>
        <dbReference type="ChEBI" id="CHEBI:456216"/>
        <dbReference type="EC" id="4.2.1.93"/>
    </reaction>
</comment>
<comment type="catalytic activity">
    <reaction evidence="2">
        <text>(6S)-NADPHX + ATP = ADP + phosphate + NADPH + H(+)</text>
        <dbReference type="Rhea" id="RHEA:32231"/>
        <dbReference type="ChEBI" id="CHEBI:15378"/>
        <dbReference type="ChEBI" id="CHEBI:30616"/>
        <dbReference type="ChEBI" id="CHEBI:43474"/>
        <dbReference type="ChEBI" id="CHEBI:57783"/>
        <dbReference type="ChEBI" id="CHEBI:64076"/>
        <dbReference type="ChEBI" id="CHEBI:456216"/>
        <dbReference type="EC" id="4.2.1.93"/>
    </reaction>
</comment>
<comment type="cofactor">
    <cofactor evidence="3">
        <name>Mg(2+)</name>
        <dbReference type="ChEBI" id="CHEBI:18420"/>
    </cofactor>
</comment>
<comment type="subcellular location">
    <subcellularLocation>
        <location evidence="3">Mitochondrion</location>
    </subcellularLocation>
</comment>
<comment type="miscellaneous">
    <text evidence="3">This protein may be expected to contain an N-terminal transit peptide but none has been predicted.</text>
</comment>
<comment type="similarity">
    <text evidence="3">Belongs to the NnrD/CARKD family.</text>
</comment>
<feature type="chain" id="PRO_0000416158" description="ATP-dependent (S)-NAD(P)H-hydrate dehydratase">
    <location>
        <begin position="1"/>
        <end position="389"/>
    </location>
</feature>
<feature type="domain" description="YjeF C-terminal" evidence="3">
    <location>
        <begin position="53"/>
        <end position="389"/>
    </location>
</feature>
<feature type="region of interest" description="Disordered" evidence="4">
    <location>
        <begin position="316"/>
        <end position="350"/>
    </location>
</feature>
<feature type="region of interest" description="Disordered" evidence="4">
    <location>
        <begin position="369"/>
        <end position="389"/>
    </location>
</feature>
<feature type="binding site" evidence="3">
    <location>
        <position position="153"/>
    </location>
    <ligand>
        <name>(6S)-NADPHX</name>
        <dbReference type="ChEBI" id="CHEBI:64076"/>
    </ligand>
</feature>
<feature type="binding site" evidence="3">
    <location>
        <begin position="205"/>
        <end position="211"/>
    </location>
    <ligand>
        <name>(6S)-NADPHX</name>
        <dbReference type="ChEBI" id="CHEBI:64076"/>
    </ligand>
</feature>
<feature type="binding site" evidence="3">
    <location>
        <begin position="245"/>
        <end position="249"/>
    </location>
    <ligand>
        <name>ATP</name>
        <dbReference type="ChEBI" id="CHEBI:30616"/>
    </ligand>
</feature>
<feature type="binding site" evidence="3">
    <location>
        <begin position="264"/>
        <end position="273"/>
    </location>
    <ligand>
        <name>ATP</name>
        <dbReference type="ChEBI" id="CHEBI:30616"/>
    </ligand>
</feature>
<feature type="binding site" evidence="3">
    <location>
        <position position="274"/>
    </location>
    <ligand>
        <name>(6S)-NADPHX</name>
        <dbReference type="ChEBI" id="CHEBI:64076"/>
    </ligand>
</feature>
<feature type="modified residue" description="Phosphotyrosine" evidence="2">
    <location>
        <position position="85"/>
    </location>
</feature>
<evidence type="ECO:0000250" key="1">
    <source>
        <dbReference type="UniProtKB" id="Q8IW45"/>
    </source>
</evidence>
<evidence type="ECO:0000250" key="2">
    <source>
        <dbReference type="UniProtKB" id="Q9CZ42"/>
    </source>
</evidence>
<evidence type="ECO:0000255" key="3">
    <source>
        <dbReference type="HAMAP-Rule" id="MF_03157"/>
    </source>
</evidence>
<evidence type="ECO:0000256" key="4">
    <source>
        <dbReference type="SAM" id="MobiDB-lite"/>
    </source>
</evidence>
<gene>
    <name evidence="1" type="primary">NAXD</name>
    <name evidence="3" type="synonym">CARKD</name>
</gene>
<dbReference type="EC" id="4.2.1.93" evidence="2 3"/>
<dbReference type="SMR" id="F7E727"/>
<dbReference type="FunCoup" id="F7E727">
    <property type="interactions" value="322"/>
</dbReference>
<dbReference type="STRING" id="9544.ENSMMUP00000016632"/>
<dbReference type="PaxDb" id="9544-ENSMMUP00000016632"/>
<dbReference type="eggNOG" id="KOG3974">
    <property type="taxonomic scope" value="Eukaryota"/>
</dbReference>
<dbReference type="HOGENOM" id="CLU_030651_2_1_1"/>
<dbReference type="InParanoid" id="F7E727"/>
<dbReference type="TreeFam" id="TF300116"/>
<dbReference type="Proteomes" id="UP000006718">
    <property type="component" value="Unassembled WGS sequence"/>
</dbReference>
<dbReference type="GO" id="GO:0005739">
    <property type="term" value="C:mitochondrion"/>
    <property type="evidence" value="ECO:0007669"/>
    <property type="project" value="UniProtKB-SubCell"/>
</dbReference>
<dbReference type="GO" id="GO:0005524">
    <property type="term" value="F:ATP binding"/>
    <property type="evidence" value="ECO:0007669"/>
    <property type="project" value="UniProtKB-KW"/>
</dbReference>
<dbReference type="GO" id="GO:0047453">
    <property type="term" value="F:ATP-dependent NAD(P)H-hydrate dehydratase activity"/>
    <property type="evidence" value="ECO:0000318"/>
    <property type="project" value="GO_Central"/>
</dbReference>
<dbReference type="GO" id="GO:0110051">
    <property type="term" value="P:metabolite repair"/>
    <property type="evidence" value="ECO:0000318"/>
    <property type="project" value="GO_Central"/>
</dbReference>
<dbReference type="GO" id="GO:0046496">
    <property type="term" value="P:nicotinamide nucleotide metabolic process"/>
    <property type="evidence" value="ECO:0007669"/>
    <property type="project" value="UniProtKB-UniRule"/>
</dbReference>
<dbReference type="CDD" id="cd01171">
    <property type="entry name" value="YXKO-related"/>
    <property type="match status" value="1"/>
</dbReference>
<dbReference type="Gene3D" id="3.40.1190.20">
    <property type="match status" value="1"/>
</dbReference>
<dbReference type="HAMAP" id="MF_01965">
    <property type="entry name" value="NADHX_dehydratase"/>
    <property type="match status" value="1"/>
</dbReference>
<dbReference type="InterPro" id="IPR000631">
    <property type="entry name" value="CARKD"/>
</dbReference>
<dbReference type="InterPro" id="IPR029056">
    <property type="entry name" value="Ribokinase-like"/>
</dbReference>
<dbReference type="NCBIfam" id="TIGR00196">
    <property type="entry name" value="yjeF_cterm"/>
    <property type="match status" value="1"/>
</dbReference>
<dbReference type="PANTHER" id="PTHR12592:SF0">
    <property type="entry name" value="ATP-DEPENDENT (S)-NAD(P)H-HYDRATE DEHYDRATASE"/>
    <property type="match status" value="1"/>
</dbReference>
<dbReference type="PANTHER" id="PTHR12592">
    <property type="entry name" value="ATP-DEPENDENT (S)-NAD(P)H-HYDRATE DEHYDRATASE FAMILY MEMBER"/>
    <property type="match status" value="1"/>
</dbReference>
<dbReference type="Pfam" id="PF01256">
    <property type="entry name" value="Carb_kinase"/>
    <property type="match status" value="1"/>
</dbReference>
<dbReference type="SUPFAM" id="SSF53613">
    <property type="entry name" value="Ribokinase-like"/>
    <property type="match status" value="1"/>
</dbReference>
<dbReference type="PROSITE" id="PS51383">
    <property type="entry name" value="YJEF_C_3"/>
    <property type="match status" value="1"/>
</dbReference>